<evidence type="ECO:0000250" key="1"/>
<evidence type="ECO:0000305" key="2"/>
<reference key="1">
    <citation type="journal article" date="2004" name="Nature">
        <title>Genome evolution in yeasts.</title>
        <authorList>
            <person name="Dujon B."/>
            <person name="Sherman D."/>
            <person name="Fischer G."/>
            <person name="Durrens P."/>
            <person name="Casaregola S."/>
            <person name="Lafontaine I."/>
            <person name="de Montigny J."/>
            <person name="Marck C."/>
            <person name="Neuveglise C."/>
            <person name="Talla E."/>
            <person name="Goffard N."/>
            <person name="Frangeul L."/>
            <person name="Aigle M."/>
            <person name="Anthouard V."/>
            <person name="Babour A."/>
            <person name="Barbe V."/>
            <person name="Barnay S."/>
            <person name="Blanchin S."/>
            <person name="Beckerich J.-M."/>
            <person name="Beyne E."/>
            <person name="Bleykasten C."/>
            <person name="Boisrame A."/>
            <person name="Boyer J."/>
            <person name="Cattolico L."/>
            <person name="Confanioleri F."/>
            <person name="de Daruvar A."/>
            <person name="Despons L."/>
            <person name="Fabre E."/>
            <person name="Fairhead C."/>
            <person name="Ferry-Dumazet H."/>
            <person name="Groppi A."/>
            <person name="Hantraye F."/>
            <person name="Hennequin C."/>
            <person name="Jauniaux N."/>
            <person name="Joyet P."/>
            <person name="Kachouri R."/>
            <person name="Kerrest A."/>
            <person name="Koszul R."/>
            <person name="Lemaire M."/>
            <person name="Lesur I."/>
            <person name="Ma L."/>
            <person name="Muller H."/>
            <person name="Nicaud J.-M."/>
            <person name="Nikolski M."/>
            <person name="Oztas S."/>
            <person name="Ozier-Kalogeropoulos O."/>
            <person name="Pellenz S."/>
            <person name="Potier S."/>
            <person name="Richard G.-F."/>
            <person name="Straub M.-L."/>
            <person name="Suleau A."/>
            <person name="Swennen D."/>
            <person name="Tekaia F."/>
            <person name="Wesolowski-Louvel M."/>
            <person name="Westhof E."/>
            <person name="Wirth B."/>
            <person name="Zeniou-Meyer M."/>
            <person name="Zivanovic Y."/>
            <person name="Bolotin-Fukuhara M."/>
            <person name="Thierry A."/>
            <person name="Bouchier C."/>
            <person name="Caudron B."/>
            <person name="Scarpelli C."/>
            <person name="Gaillardin C."/>
            <person name="Weissenbach J."/>
            <person name="Wincker P."/>
            <person name="Souciet J.-L."/>
        </authorList>
    </citation>
    <scope>NUCLEOTIDE SEQUENCE [LARGE SCALE GENOMIC DNA]</scope>
    <source>
        <strain>ATCC 8585 / CBS 2359 / DSM 70799 / NBRC 1267 / NRRL Y-1140 / WM37</strain>
    </source>
</reference>
<sequence>MSHHKKRVYPQAQYQIAEGIAQPIVGGGVPPQTVGAGQPQFLTPAQQHLHQQIDQASNGIGNMQLHNVPVVDPTAFQQAGTPVQQPPYGGAPQYGQPMNSGYGADNISGVQQQYQQPMQQPYGQTYGQQQQQPQYQQPGVGMAVGKPMNQLYPVDLFQELPPPITDLSLPPPPLMLPPEKMIVPNDTVNNCSDHLRCTLNAVPKNNSLLKKSKLPLAMVIRPYTKLTDSECPVPTSEDGVVVRCRRCRAYLNPFVQVIENGLRWRCNFCNLANNFPQAIDMNGNRYERPEFNHSVVDFVAPKEYAVRPPPPSTYAFILDVSQASIKNGLLATAARTLLESLDTIPNHDERTRISIICVDQSLHYFRIPLDEEGDNIKMYDVADLDEPFLPSPTGLLVPLIEARSNIEKLLTSLPEIFQQNIQPRFALASALKSALNLIRAQGGKIIVVGATLANVGEGTLHKRNEKAVANTSKEASTLLNTGDAFYKSFPIECNKYQVTVDMFMASDDYVDIASISNLGRFTGGQTHFYPGFSALNLIDVTKFSKEFSKHVSMDLSLEAVMRARGSSGLKMTGFYGHFFNRSSDLCALATVPRDQSYVFEIGIDEQLTKDFVYIQIALLLTSNAAQRRIRVITIGIPTTDKLTEVYASADQLAITAYFAQKAVERAPSSGFEDTREFFNKSVQEVLATYKKEVLTSNTGGGAPLMLCSNLRMWPLLMHSLTKHMAFRSGIVPADHRAQALNNLETLPLPYLIQNIYPTVYSLHDMPDEAGLPDEETGEIVLPQPINSTSSLLERYGLYLIDTGLDMFLWIGGDAVPELVTDVFGTPDIMEIPIGKNELPLLDATEFNLRVRNVITKIREHDDVIFYKTLHIVRGASPSEPMNHPSAREVASLRLWTASQLVEDKVQNSWNYREFLQNMKTRISK</sequence>
<organism>
    <name type="scientific">Kluyveromyces lactis (strain ATCC 8585 / CBS 2359 / DSM 70799 / NBRC 1267 / NRRL Y-1140 / WM37)</name>
    <name type="common">Yeast</name>
    <name type="synonym">Candida sphaerica</name>
    <dbReference type="NCBI Taxonomy" id="284590"/>
    <lineage>
        <taxon>Eukaryota</taxon>
        <taxon>Fungi</taxon>
        <taxon>Dikarya</taxon>
        <taxon>Ascomycota</taxon>
        <taxon>Saccharomycotina</taxon>
        <taxon>Saccharomycetes</taxon>
        <taxon>Saccharomycetales</taxon>
        <taxon>Saccharomycetaceae</taxon>
        <taxon>Kluyveromyces</taxon>
    </lineage>
</organism>
<accession>Q6CLE0</accession>
<dbReference type="EMBL" id="CR382126">
    <property type="protein sequence ID" value="CAG97957.1"/>
    <property type="molecule type" value="Genomic_DNA"/>
</dbReference>
<dbReference type="RefSeq" id="XP_455249.1">
    <property type="nucleotide sequence ID" value="XM_455249.1"/>
</dbReference>
<dbReference type="SMR" id="Q6CLE0"/>
<dbReference type="FunCoup" id="Q6CLE0">
    <property type="interactions" value="855"/>
</dbReference>
<dbReference type="STRING" id="284590.Q6CLE0"/>
<dbReference type="PaxDb" id="284590-Q6CLE0"/>
<dbReference type="KEGG" id="kla:KLLA0_F03729g"/>
<dbReference type="eggNOG" id="KOG1985">
    <property type="taxonomic scope" value="Eukaryota"/>
</dbReference>
<dbReference type="HOGENOM" id="CLU_004589_2_1_1"/>
<dbReference type="InParanoid" id="Q6CLE0"/>
<dbReference type="OMA" id="AVECSKQ"/>
<dbReference type="Proteomes" id="UP000000598">
    <property type="component" value="Chromosome F"/>
</dbReference>
<dbReference type="GO" id="GO:0030127">
    <property type="term" value="C:COPII vesicle coat"/>
    <property type="evidence" value="ECO:0007669"/>
    <property type="project" value="InterPro"/>
</dbReference>
<dbReference type="GO" id="GO:0070971">
    <property type="term" value="C:endoplasmic reticulum exit site"/>
    <property type="evidence" value="ECO:0007669"/>
    <property type="project" value="TreeGrafter"/>
</dbReference>
<dbReference type="GO" id="GO:0005789">
    <property type="term" value="C:endoplasmic reticulum membrane"/>
    <property type="evidence" value="ECO:0007669"/>
    <property type="project" value="UniProtKB-SubCell"/>
</dbReference>
<dbReference type="GO" id="GO:0000139">
    <property type="term" value="C:Golgi membrane"/>
    <property type="evidence" value="ECO:0007669"/>
    <property type="project" value="UniProtKB-SubCell"/>
</dbReference>
<dbReference type="GO" id="GO:0000149">
    <property type="term" value="F:SNARE binding"/>
    <property type="evidence" value="ECO:0007669"/>
    <property type="project" value="TreeGrafter"/>
</dbReference>
<dbReference type="GO" id="GO:0008270">
    <property type="term" value="F:zinc ion binding"/>
    <property type="evidence" value="ECO:0007669"/>
    <property type="project" value="InterPro"/>
</dbReference>
<dbReference type="GO" id="GO:0090110">
    <property type="term" value="P:COPII-coated vesicle cargo loading"/>
    <property type="evidence" value="ECO:0007669"/>
    <property type="project" value="TreeGrafter"/>
</dbReference>
<dbReference type="GO" id="GO:0006886">
    <property type="term" value="P:intracellular protein transport"/>
    <property type="evidence" value="ECO:0007669"/>
    <property type="project" value="InterPro"/>
</dbReference>
<dbReference type="CDD" id="cd01479">
    <property type="entry name" value="Sec24-like"/>
    <property type="match status" value="1"/>
</dbReference>
<dbReference type="FunFam" id="3.40.20.10:FF:000049">
    <property type="entry name" value="Vesicle coat component"/>
    <property type="match status" value="1"/>
</dbReference>
<dbReference type="Gene3D" id="2.60.40.1670">
    <property type="entry name" value="beta-sandwich domain of Sec23/24"/>
    <property type="match status" value="1"/>
</dbReference>
<dbReference type="Gene3D" id="1.20.120.730">
    <property type="entry name" value="Sec23/Sec24 helical domain"/>
    <property type="match status" value="1"/>
</dbReference>
<dbReference type="Gene3D" id="3.40.20.10">
    <property type="entry name" value="Severin"/>
    <property type="match status" value="1"/>
</dbReference>
<dbReference type="Gene3D" id="3.40.50.410">
    <property type="entry name" value="von Willebrand factor, type A domain"/>
    <property type="match status" value="1"/>
</dbReference>
<dbReference type="Gene3D" id="2.30.30.380">
    <property type="entry name" value="Zn-finger domain of Sec23/24"/>
    <property type="match status" value="1"/>
</dbReference>
<dbReference type="InterPro" id="IPR029006">
    <property type="entry name" value="ADF-H/Gelsolin-like_dom_sf"/>
</dbReference>
<dbReference type="InterPro" id="IPR007123">
    <property type="entry name" value="Gelsolin-like_dom"/>
</dbReference>
<dbReference type="InterPro" id="IPR036180">
    <property type="entry name" value="Gelsolin-like_dom_sf"/>
</dbReference>
<dbReference type="InterPro" id="IPR006900">
    <property type="entry name" value="Sec23/24_helical_dom"/>
</dbReference>
<dbReference type="InterPro" id="IPR036175">
    <property type="entry name" value="Sec23/24_helical_dom_sf"/>
</dbReference>
<dbReference type="InterPro" id="IPR006896">
    <property type="entry name" value="Sec23/24_trunk_dom"/>
</dbReference>
<dbReference type="InterPro" id="IPR012990">
    <property type="entry name" value="Sec23_24_beta_S"/>
</dbReference>
<dbReference type="InterPro" id="IPR050550">
    <property type="entry name" value="SEC23_SEC24_subfamily"/>
</dbReference>
<dbReference type="InterPro" id="IPR041742">
    <property type="entry name" value="Sec24-like_trunk_dom"/>
</dbReference>
<dbReference type="InterPro" id="IPR036465">
    <property type="entry name" value="vWFA_dom_sf"/>
</dbReference>
<dbReference type="InterPro" id="IPR006895">
    <property type="entry name" value="Znf_Sec23_Sec24"/>
</dbReference>
<dbReference type="InterPro" id="IPR036174">
    <property type="entry name" value="Znf_Sec23_Sec24_sf"/>
</dbReference>
<dbReference type="PANTHER" id="PTHR13803">
    <property type="entry name" value="SEC24-RELATED PROTEIN"/>
    <property type="match status" value="1"/>
</dbReference>
<dbReference type="PANTHER" id="PTHR13803:SF39">
    <property type="entry name" value="SECRETORY 24AB, ISOFORM A"/>
    <property type="match status" value="1"/>
</dbReference>
<dbReference type="Pfam" id="PF00626">
    <property type="entry name" value="Gelsolin"/>
    <property type="match status" value="1"/>
</dbReference>
<dbReference type="Pfam" id="PF08033">
    <property type="entry name" value="Sec23_BS"/>
    <property type="match status" value="1"/>
</dbReference>
<dbReference type="Pfam" id="PF04815">
    <property type="entry name" value="Sec23_helical"/>
    <property type="match status" value="1"/>
</dbReference>
<dbReference type="Pfam" id="PF04811">
    <property type="entry name" value="Sec23_trunk"/>
    <property type="match status" value="1"/>
</dbReference>
<dbReference type="Pfam" id="PF04810">
    <property type="entry name" value="zf-Sec23_Sec24"/>
    <property type="match status" value="1"/>
</dbReference>
<dbReference type="SUPFAM" id="SSF81995">
    <property type="entry name" value="beta-sandwich domain of Sec23/24"/>
    <property type="match status" value="1"/>
</dbReference>
<dbReference type="SUPFAM" id="SSF82754">
    <property type="entry name" value="C-terminal, gelsolin-like domain of Sec23/24"/>
    <property type="match status" value="1"/>
</dbReference>
<dbReference type="SUPFAM" id="SSF81811">
    <property type="entry name" value="Helical domain of Sec23/24"/>
    <property type="match status" value="1"/>
</dbReference>
<dbReference type="SUPFAM" id="SSF53300">
    <property type="entry name" value="vWA-like"/>
    <property type="match status" value="1"/>
</dbReference>
<dbReference type="SUPFAM" id="SSF82919">
    <property type="entry name" value="Zn-finger domain of Sec23/24"/>
    <property type="match status" value="1"/>
</dbReference>
<name>SEC24_KLULA</name>
<comment type="function">
    <text evidence="1">Component of the coat protein complex II (COPII) which promotes the formation of transport vesicles from the endoplasmic reticulum (ER). The coat has two main functions, the physical deformation of the endoplasmic reticulum membrane into vesicles and the selection of cargo molecules (By similarity).</text>
</comment>
<comment type="subunit">
    <text evidence="1">The COPII coat is composed of at least 5 proteins: the SEC23/24 complex, the SEC13/31 complex, and the protein SAR1. Golgi apparatus membrane; Peripheral membrane protein; Cytoplasmic side.</text>
</comment>
<comment type="subcellular location">
    <subcellularLocation>
        <location evidence="1">Cytoplasm</location>
    </subcellularLocation>
    <subcellularLocation>
        <location evidence="1">Cytoplasmic vesicle</location>
        <location evidence="1">COPII-coated vesicle membrane</location>
        <topology evidence="1">Peripheral membrane protein</topology>
        <orientation evidence="1">Cytoplasmic side</orientation>
    </subcellularLocation>
    <subcellularLocation>
        <location evidence="1">Endoplasmic reticulum membrane</location>
        <topology evidence="1">Peripheral membrane protein</topology>
        <orientation evidence="1">Cytoplasmic side</orientation>
    </subcellularLocation>
    <subcellularLocation>
        <location evidence="1">Golgi apparatus membrane</location>
        <topology evidence="1">Peripheral membrane protein</topology>
        <orientation evidence="1">Cytoplasmic side</orientation>
    </subcellularLocation>
</comment>
<comment type="similarity">
    <text evidence="2">Belongs to the SEC23/SEC24 family. SEC24 subfamily.</text>
</comment>
<protein>
    <recommendedName>
        <fullName>Protein transport protein SEC24</fullName>
    </recommendedName>
</protein>
<keyword id="KW-0963">Cytoplasm</keyword>
<keyword id="KW-0968">Cytoplasmic vesicle</keyword>
<keyword id="KW-0256">Endoplasmic reticulum</keyword>
<keyword id="KW-0931">ER-Golgi transport</keyword>
<keyword id="KW-0333">Golgi apparatus</keyword>
<keyword id="KW-0472">Membrane</keyword>
<keyword id="KW-0479">Metal-binding</keyword>
<keyword id="KW-0653">Protein transport</keyword>
<keyword id="KW-1185">Reference proteome</keyword>
<keyword id="KW-0813">Transport</keyword>
<keyword id="KW-0862">Zinc</keyword>
<feature type="chain" id="PRO_0000295489" description="Protein transport protein SEC24">
    <location>
        <begin position="1"/>
        <end position="924"/>
    </location>
</feature>
<feature type="region of interest" description="Zinc finger-like">
    <location>
        <begin position="244"/>
        <end position="269"/>
    </location>
</feature>
<feature type="binding site" evidence="1">
    <location>
        <position position="244"/>
    </location>
    <ligand>
        <name>Zn(2+)</name>
        <dbReference type="ChEBI" id="CHEBI:29105"/>
    </ligand>
</feature>
<feature type="binding site" evidence="1">
    <location>
        <position position="247"/>
    </location>
    <ligand>
        <name>Zn(2+)</name>
        <dbReference type="ChEBI" id="CHEBI:29105"/>
    </ligand>
</feature>
<feature type="binding site" evidence="1">
    <location>
        <position position="266"/>
    </location>
    <ligand>
        <name>Zn(2+)</name>
        <dbReference type="ChEBI" id="CHEBI:29105"/>
    </ligand>
</feature>
<feature type="binding site" evidence="1">
    <location>
        <position position="269"/>
    </location>
    <ligand>
        <name>Zn(2+)</name>
        <dbReference type="ChEBI" id="CHEBI:29105"/>
    </ligand>
</feature>
<proteinExistence type="inferred from homology"/>
<gene>
    <name type="primary">SEC24</name>
    <name type="ordered locus">KLLA0F03729g</name>
</gene>